<proteinExistence type="inferred from homology"/>
<name>GEP7_YEAS2</name>
<reference key="1">
    <citation type="journal article" date="2009" name="Genome Res.">
        <title>Genome structure of a Saccharomyces cerevisiae strain widely used in bioethanol production.</title>
        <authorList>
            <person name="Argueso J.L."/>
            <person name="Carazzolle M.F."/>
            <person name="Mieczkowski P.A."/>
            <person name="Duarte F.M."/>
            <person name="Netto O.V.C."/>
            <person name="Missawa S.K."/>
            <person name="Galzerani F."/>
            <person name="Costa G.G.L."/>
            <person name="Vidal R.O."/>
            <person name="Noronha M.F."/>
            <person name="Dominska M."/>
            <person name="Andrietta M.G.S."/>
            <person name="Andrietta S.R."/>
            <person name="Cunha A.F."/>
            <person name="Gomes L.H."/>
            <person name="Tavares F.C.A."/>
            <person name="Alcarde A.R."/>
            <person name="Dietrich F.S."/>
            <person name="McCusker J.H."/>
            <person name="Petes T.D."/>
            <person name="Pereira G.A.G."/>
        </authorList>
    </citation>
    <scope>NUCLEOTIDE SEQUENCE [LARGE SCALE GENOMIC DNA]</scope>
    <source>
        <strain>JAY291</strain>
    </source>
</reference>
<protein>
    <recommendedName>
        <fullName>Genetic interactor of prohibitin 7, mitochondrial</fullName>
    </recommendedName>
</protein>
<organism>
    <name type="scientific">Saccharomyces cerevisiae (strain JAY291)</name>
    <name type="common">Baker's yeast</name>
    <dbReference type="NCBI Taxonomy" id="574961"/>
    <lineage>
        <taxon>Eukaryota</taxon>
        <taxon>Fungi</taxon>
        <taxon>Dikarya</taxon>
        <taxon>Ascomycota</taxon>
        <taxon>Saccharomycotina</taxon>
        <taxon>Saccharomycetes</taxon>
        <taxon>Saccharomycetales</taxon>
        <taxon>Saccharomycetaceae</taxon>
        <taxon>Saccharomyces</taxon>
    </lineage>
</organism>
<evidence type="ECO:0000250" key="1"/>
<evidence type="ECO:0000255" key="2"/>
<evidence type="ECO:0000305" key="3"/>
<gene>
    <name type="primary">GEP7</name>
    <name type="ORF">C1Q_02976</name>
</gene>
<dbReference type="EMBL" id="ACFL01000144">
    <property type="protein sequence ID" value="EEU06579.1"/>
    <property type="molecule type" value="Genomic_DNA"/>
</dbReference>
<dbReference type="OrthoDB" id="41474at4893"/>
<dbReference type="Proteomes" id="UP000008073">
    <property type="component" value="Unassembled WGS sequence"/>
</dbReference>
<dbReference type="GO" id="GO:0031966">
    <property type="term" value="C:mitochondrial membrane"/>
    <property type="evidence" value="ECO:0007669"/>
    <property type="project" value="UniProtKB-SubCell"/>
</dbReference>
<comment type="function">
    <text evidence="1">Involved in respiratory growth and required for cell survival in the absence of prohibitins or GEM1.</text>
</comment>
<comment type="subcellular location">
    <subcellularLocation>
        <location evidence="1">Mitochondrion membrane</location>
        <topology evidence="1">Single-pass membrane protein</topology>
    </subcellularLocation>
</comment>
<comment type="similarity">
    <text evidence="3">Belongs to the GEP7 family.</text>
</comment>
<sequence length="287" mass="32946">MVLSNVKIFRLKSHRAFRIGPMIKAVAGNLLVKRFYQPKLERIPPASLLLKQKIRLAQNGSTTSTENPISFSQTMSEIFSVLQPSAPDLDEDKTSGLKRDHLLTERLNNGELGVIMNKFFNPSSTHNNQLIDTNILLQNFPKLSGNDLDLLDFAINEKMRGNWNDLKQDFIQLWYYKSFGFLGPRTQFVLTNSSPSLRSQFLKLPFTEYNWFLLQNNKNANILPADVQNVVKVFHLDDKRFTWKSIDPFSKAIISFVVFVSIYVWLDESAKQKTKDLPAQKSTVISE</sequence>
<keyword id="KW-0472">Membrane</keyword>
<keyword id="KW-0496">Mitochondrion</keyword>
<keyword id="KW-0809">Transit peptide</keyword>
<keyword id="KW-0812">Transmembrane</keyword>
<keyword id="KW-1133">Transmembrane helix</keyword>
<feature type="transit peptide" description="Mitochondrion" evidence="2">
    <location>
        <begin position="1"/>
        <end position="24"/>
    </location>
</feature>
<feature type="chain" id="PRO_0000399741" description="Genetic interactor of prohibitin 7, mitochondrial">
    <location>
        <begin position="25"/>
        <end position="287"/>
    </location>
</feature>
<feature type="transmembrane region" description="Helical" evidence="2">
    <location>
        <begin position="250"/>
        <end position="266"/>
    </location>
</feature>
<accession>C7GRJ3</accession>